<dbReference type="EC" id="2.8.1.13" evidence="1"/>
<dbReference type="EMBL" id="CP000383">
    <property type="protein sequence ID" value="ABG58872.1"/>
    <property type="status" value="ALT_INIT"/>
    <property type="molecule type" value="Genomic_DNA"/>
</dbReference>
<dbReference type="RefSeq" id="WP_041932275.1">
    <property type="nucleotide sequence ID" value="NC_008255.1"/>
</dbReference>
<dbReference type="SMR" id="Q11UP4"/>
<dbReference type="STRING" id="269798.CHU_1602"/>
<dbReference type="KEGG" id="chu:CHU_1602"/>
<dbReference type="eggNOG" id="COG0482">
    <property type="taxonomic scope" value="Bacteria"/>
</dbReference>
<dbReference type="HOGENOM" id="CLU_035188_0_0_10"/>
<dbReference type="OrthoDB" id="9800696at2"/>
<dbReference type="Proteomes" id="UP000001822">
    <property type="component" value="Chromosome"/>
</dbReference>
<dbReference type="GO" id="GO:0005737">
    <property type="term" value="C:cytoplasm"/>
    <property type="evidence" value="ECO:0007669"/>
    <property type="project" value="UniProtKB-SubCell"/>
</dbReference>
<dbReference type="GO" id="GO:0005524">
    <property type="term" value="F:ATP binding"/>
    <property type="evidence" value="ECO:0007669"/>
    <property type="project" value="UniProtKB-KW"/>
</dbReference>
<dbReference type="GO" id="GO:0000049">
    <property type="term" value="F:tRNA binding"/>
    <property type="evidence" value="ECO:0007669"/>
    <property type="project" value="UniProtKB-KW"/>
</dbReference>
<dbReference type="GO" id="GO:0103016">
    <property type="term" value="F:tRNA-uridine 2-sulfurtransferase activity"/>
    <property type="evidence" value="ECO:0007669"/>
    <property type="project" value="UniProtKB-EC"/>
</dbReference>
<dbReference type="GO" id="GO:0002143">
    <property type="term" value="P:tRNA wobble position uridine thiolation"/>
    <property type="evidence" value="ECO:0007669"/>
    <property type="project" value="TreeGrafter"/>
</dbReference>
<dbReference type="CDD" id="cd01998">
    <property type="entry name" value="MnmA_TRMU-like"/>
    <property type="match status" value="1"/>
</dbReference>
<dbReference type="FunFam" id="3.40.50.620:FF:000115">
    <property type="entry name" value="tRNA-specific 2-thiouridylase MnmA"/>
    <property type="match status" value="1"/>
</dbReference>
<dbReference type="Gene3D" id="2.30.30.280">
    <property type="entry name" value="Adenine nucleotide alpha hydrolases-like domains"/>
    <property type="match status" value="1"/>
</dbReference>
<dbReference type="Gene3D" id="3.40.50.620">
    <property type="entry name" value="HUPs"/>
    <property type="match status" value="1"/>
</dbReference>
<dbReference type="Gene3D" id="2.40.30.10">
    <property type="entry name" value="Translation factors"/>
    <property type="match status" value="1"/>
</dbReference>
<dbReference type="HAMAP" id="MF_00144">
    <property type="entry name" value="tRNA_thiouridyl_MnmA"/>
    <property type="match status" value="1"/>
</dbReference>
<dbReference type="InterPro" id="IPR004506">
    <property type="entry name" value="MnmA-like"/>
</dbReference>
<dbReference type="InterPro" id="IPR046885">
    <property type="entry name" value="MnmA-like_C"/>
</dbReference>
<dbReference type="InterPro" id="IPR046884">
    <property type="entry name" value="MnmA-like_central"/>
</dbReference>
<dbReference type="InterPro" id="IPR023382">
    <property type="entry name" value="MnmA-like_central_sf"/>
</dbReference>
<dbReference type="InterPro" id="IPR014729">
    <property type="entry name" value="Rossmann-like_a/b/a_fold"/>
</dbReference>
<dbReference type="NCBIfam" id="NF001138">
    <property type="entry name" value="PRK00143.1"/>
    <property type="match status" value="1"/>
</dbReference>
<dbReference type="NCBIfam" id="TIGR00420">
    <property type="entry name" value="trmU"/>
    <property type="match status" value="1"/>
</dbReference>
<dbReference type="PANTHER" id="PTHR11933:SF5">
    <property type="entry name" value="MITOCHONDRIAL TRNA-SPECIFIC 2-THIOURIDYLASE 1"/>
    <property type="match status" value="1"/>
</dbReference>
<dbReference type="PANTHER" id="PTHR11933">
    <property type="entry name" value="TRNA 5-METHYLAMINOMETHYL-2-THIOURIDYLATE -METHYLTRANSFERASE"/>
    <property type="match status" value="1"/>
</dbReference>
<dbReference type="Pfam" id="PF03054">
    <property type="entry name" value="tRNA_Me_trans"/>
    <property type="match status" value="1"/>
</dbReference>
<dbReference type="Pfam" id="PF20258">
    <property type="entry name" value="tRNA_Me_trans_C"/>
    <property type="match status" value="1"/>
</dbReference>
<dbReference type="Pfam" id="PF20259">
    <property type="entry name" value="tRNA_Me_trans_M"/>
    <property type="match status" value="1"/>
</dbReference>
<dbReference type="SUPFAM" id="SSF52402">
    <property type="entry name" value="Adenine nucleotide alpha hydrolases-like"/>
    <property type="match status" value="1"/>
</dbReference>
<comment type="function">
    <text evidence="1">Catalyzes the 2-thiolation of uridine at the wobble position (U34) of tRNA, leading to the formation of s(2)U34.</text>
</comment>
<comment type="catalytic activity">
    <reaction evidence="1">
        <text>S-sulfanyl-L-cysteinyl-[protein] + uridine(34) in tRNA + AH2 + ATP = 2-thiouridine(34) in tRNA + L-cysteinyl-[protein] + A + AMP + diphosphate + H(+)</text>
        <dbReference type="Rhea" id="RHEA:47032"/>
        <dbReference type="Rhea" id="RHEA-COMP:10131"/>
        <dbReference type="Rhea" id="RHEA-COMP:11726"/>
        <dbReference type="Rhea" id="RHEA-COMP:11727"/>
        <dbReference type="Rhea" id="RHEA-COMP:11728"/>
        <dbReference type="ChEBI" id="CHEBI:13193"/>
        <dbReference type="ChEBI" id="CHEBI:15378"/>
        <dbReference type="ChEBI" id="CHEBI:17499"/>
        <dbReference type="ChEBI" id="CHEBI:29950"/>
        <dbReference type="ChEBI" id="CHEBI:30616"/>
        <dbReference type="ChEBI" id="CHEBI:33019"/>
        <dbReference type="ChEBI" id="CHEBI:61963"/>
        <dbReference type="ChEBI" id="CHEBI:65315"/>
        <dbReference type="ChEBI" id="CHEBI:87170"/>
        <dbReference type="ChEBI" id="CHEBI:456215"/>
        <dbReference type="EC" id="2.8.1.13"/>
    </reaction>
</comment>
<comment type="subcellular location">
    <subcellularLocation>
        <location evidence="1">Cytoplasm</location>
    </subcellularLocation>
</comment>
<comment type="similarity">
    <text evidence="1">Belongs to the MnmA/TRMU family.</text>
</comment>
<comment type="sequence caution" evidence="2">
    <conflict type="erroneous initiation">
        <sequence resource="EMBL-CDS" id="ABG58872"/>
    </conflict>
</comment>
<proteinExistence type="inferred from homology"/>
<protein>
    <recommendedName>
        <fullName evidence="1">tRNA-specific 2-thiouridylase MnmA</fullName>
        <ecNumber evidence="1">2.8.1.13</ecNumber>
    </recommendedName>
</protein>
<keyword id="KW-0067">ATP-binding</keyword>
<keyword id="KW-0963">Cytoplasm</keyword>
<keyword id="KW-1015">Disulfide bond</keyword>
<keyword id="KW-0547">Nucleotide-binding</keyword>
<keyword id="KW-1185">Reference proteome</keyword>
<keyword id="KW-0694">RNA-binding</keyword>
<keyword id="KW-0808">Transferase</keyword>
<keyword id="KW-0819">tRNA processing</keyword>
<keyword id="KW-0820">tRNA-binding</keyword>
<accession>Q11UP4</accession>
<gene>
    <name evidence="1" type="primary">mnmA</name>
    <name type="ordered locus">CHU_1602</name>
</gene>
<organism>
    <name type="scientific">Cytophaga hutchinsonii (strain ATCC 33406 / DSM 1761 / CIP 103989 / NBRC 15051 / NCIMB 9469 / D465)</name>
    <dbReference type="NCBI Taxonomy" id="269798"/>
    <lineage>
        <taxon>Bacteria</taxon>
        <taxon>Pseudomonadati</taxon>
        <taxon>Bacteroidota</taxon>
        <taxon>Cytophagia</taxon>
        <taxon>Cytophagales</taxon>
        <taxon>Cytophagaceae</taxon>
        <taxon>Cytophaga</taxon>
    </lineage>
</organism>
<feature type="chain" id="PRO_0000349604" description="tRNA-specific 2-thiouridylase MnmA">
    <location>
        <begin position="1"/>
        <end position="368"/>
    </location>
</feature>
<feature type="region of interest" description="Interaction with tRNA" evidence="1">
    <location>
        <begin position="152"/>
        <end position="154"/>
    </location>
</feature>
<feature type="region of interest" description="Interaction with tRNA" evidence="1">
    <location>
        <begin position="313"/>
        <end position="314"/>
    </location>
</feature>
<feature type="active site" description="Nucleophile" evidence="1">
    <location>
        <position position="106"/>
    </location>
</feature>
<feature type="active site" description="Cysteine persulfide intermediate" evidence="1">
    <location>
        <position position="203"/>
    </location>
</feature>
<feature type="binding site" evidence="1">
    <location>
        <begin position="10"/>
        <end position="17"/>
    </location>
    <ligand>
        <name>ATP</name>
        <dbReference type="ChEBI" id="CHEBI:30616"/>
    </ligand>
</feature>
<feature type="binding site" evidence="1">
    <location>
        <position position="36"/>
    </location>
    <ligand>
        <name>ATP</name>
        <dbReference type="ChEBI" id="CHEBI:30616"/>
    </ligand>
</feature>
<feature type="binding site" evidence="1">
    <location>
        <position position="130"/>
    </location>
    <ligand>
        <name>ATP</name>
        <dbReference type="ChEBI" id="CHEBI:30616"/>
    </ligand>
</feature>
<feature type="site" description="Interaction with tRNA" evidence="1">
    <location>
        <position position="131"/>
    </location>
</feature>
<feature type="site" description="Interaction with tRNA" evidence="1">
    <location>
        <position position="345"/>
    </location>
</feature>
<feature type="disulfide bond" description="Alternate" evidence="1">
    <location>
        <begin position="106"/>
        <end position="203"/>
    </location>
</feature>
<evidence type="ECO:0000255" key="1">
    <source>
        <dbReference type="HAMAP-Rule" id="MF_00144"/>
    </source>
</evidence>
<evidence type="ECO:0000305" key="2"/>
<reference key="1">
    <citation type="journal article" date="2007" name="Appl. Environ. Microbiol.">
        <title>Genome sequence of the cellulolytic gliding bacterium Cytophaga hutchinsonii.</title>
        <authorList>
            <person name="Xie G."/>
            <person name="Bruce D.C."/>
            <person name="Challacombe J.F."/>
            <person name="Chertkov O."/>
            <person name="Detter J.C."/>
            <person name="Gilna P."/>
            <person name="Han C.S."/>
            <person name="Lucas S."/>
            <person name="Misra M."/>
            <person name="Myers G.L."/>
            <person name="Richardson P."/>
            <person name="Tapia R."/>
            <person name="Thayer N."/>
            <person name="Thompson L.S."/>
            <person name="Brettin T.S."/>
            <person name="Henrissat B."/>
            <person name="Wilson D.B."/>
            <person name="McBride M.J."/>
        </authorList>
    </citation>
    <scope>NUCLEOTIDE SEQUENCE [LARGE SCALE GENOMIC DNA]</scope>
    <source>
        <strain>ATCC 33406 / DSM 1761 / JCM 20678 / CIP 103989 / IAM 12607 / NBRC 15051 / NCIMB 9469 / D465</strain>
    </source>
</reference>
<name>MNMA_CYTH3</name>
<sequence length="368" mass="41459">MSKKGRVLVAMSGGIDSSVAAVMLHEQGYEVIGMTMKTWDYANLGGSKKETGCCSLDSINDARNIAVSLGFPHYIVDIREEFGDYVINHFNKEYLDGRTPNPCVLCNTHIKWDSLLRRADKMDCDFIATGHYAQVRSENNRFVISKGLDENKDQSYALWGISQQSLSRTMFPLGHLHKTDIRAMAAERGFMDLVNKSESYEICFVPDNDYRGFLKRRNPGLEEEVRGGEFVMEDGTVVGKHEGYPFYTIGQRKGLGITLGYPVFVTEIQKENNRVVLGREEGLNRNGMWVDQLIMSKYENLKGIQKQSITKVRYNDDGTSSTIEQVGDEMRVLFHEHVKAIAPGQAAVFYEGNDVIGGGWIKSSFKQD</sequence>